<name>NQOR_AZOSB</name>
<organism>
    <name type="scientific">Azoarcus sp. (strain BH72)</name>
    <dbReference type="NCBI Taxonomy" id="418699"/>
    <lineage>
        <taxon>Bacteria</taxon>
        <taxon>Pseudomonadati</taxon>
        <taxon>Pseudomonadota</taxon>
        <taxon>Betaproteobacteria</taxon>
        <taxon>Rhodocyclales</taxon>
        <taxon>Zoogloeaceae</taxon>
        <taxon>Azoarcus</taxon>
    </lineage>
</organism>
<dbReference type="EC" id="1.6.5.2" evidence="1"/>
<dbReference type="EMBL" id="AM406670">
    <property type="protein sequence ID" value="CAL95584.1"/>
    <property type="molecule type" value="Genomic_DNA"/>
</dbReference>
<dbReference type="RefSeq" id="WP_011766694.1">
    <property type="nucleotide sequence ID" value="NC_008702.1"/>
</dbReference>
<dbReference type="SMR" id="A1K9S9"/>
<dbReference type="STRING" id="62928.azo2968"/>
<dbReference type="KEGG" id="aoa:dqs_3103"/>
<dbReference type="KEGG" id="azo:azo2968"/>
<dbReference type="eggNOG" id="COG0655">
    <property type="taxonomic scope" value="Bacteria"/>
</dbReference>
<dbReference type="HOGENOM" id="CLU_051402_0_2_4"/>
<dbReference type="OrthoDB" id="9801479at2"/>
<dbReference type="Proteomes" id="UP000002588">
    <property type="component" value="Chromosome"/>
</dbReference>
<dbReference type="GO" id="GO:0016020">
    <property type="term" value="C:membrane"/>
    <property type="evidence" value="ECO:0007669"/>
    <property type="project" value="TreeGrafter"/>
</dbReference>
<dbReference type="GO" id="GO:0050660">
    <property type="term" value="F:flavin adenine dinucleotide binding"/>
    <property type="evidence" value="ECO:0007669"/>
    <property type="project" value="UniProtKB-UniRule"/>
</dbReference>
<dbReference type="GO" id="GO:0010181">
    <property type="term" value="F:FMN binding"/>
    <property type="evidence" value="ECO:0007669"/>
    <property type="project" value="InterPro"/>
</dbReference>
<dbReference type="GO" id="GO:0051287">
    <property type="term" value="F:NAD binding"/>
    <property type="evidence" value="ECO:0007669"/>
    <property type="project" value="UniProtKB-UniRule"/>
</dbReference>
<dbReference type="GO" id="GO:0050136">
    <property type="term" value="F:NADH:ubiquinone reductase (non-electrogenic) activity"/>
    <property type="evidence" value="ECO:0007669"/>
    <property type="project" value="RHEA"/>
</dbReference>
<dbReference type="GO" id="GO:0050661">
    <property type="term" value="F:NADP binding"/>
    <property type="evidence" value="ECO:0007669"/>
    <property type="project" value="UniProtKB-UniRule"/>
</dbReference>
<dbReference type="GO" id="GO:0008753">
    <property type="term" value="F:NADPH dehydrogenase (quinone) activity"/>
    <property type="evidence" value="ECO:0007669"/>
    <property type="project" value="RHEA"/>
</dbReference>
<dbReference type="FunFam" id="3.40.50.360:FF:000001">
    <property type="entry name" value="NAD(P)H dehydrogenase (Quinone) FQR1-like"/>
    <property type="match status" value="1"/>
</dbReference>
<dbReference type="Gene3D" id="3.40.50.360">
    <property type="match status" value="1"/>
</dbReference>
<dbReference type="HAMAP" id="MF_01017">
    <property type="entry name" value="NQOR"/>
    <property type="match status" value="1"/>
</dbReference>
<dbReference type="InterPro" id="IPR008254">
    <property type="entry name" value="Flavodoxin/NO_synth"/>
</dbReference>
<dbReference type="InterPro" id="IPR029039">
    <property type="entry name" value="Flavoprotein-like_sf"/>
</dbReference>
<dbReference type="InterPro" id="IPR010089">
    <property type="entry name" value="Flavoprotein_WrbA-like"/>
</dbReference>
<dbReference type="InterPro" id="IPR005025">
    <property type="entry name" value="FMN_Rdtase-like_dom"/>
</dbReference>
<dbReference type="InterPro" id="IPR037513">
    <property type="entry name" value="NQO"/>
</dbReference>
<dbReference type="NCBIfam" id="TIGR01755">
    <property type="entry name" value="flav_wrbA"/>
    <property type="match status" value="1"/>
</dbReference>
<dbReference type="NCBIfam" id="NF002999">
    <property type="entry name" value="PRK03767.1"/>
    <property type="match status" value="1"/>
</dbReference>
<dbReference type="PANTHER" id="PTHR30546">
    <property type="entry name" value="FLAVODOXIN-RELATED PROTEIN WRBA-RELATED"/>
    <property type="match status" value="1"/>
</dbReference>
<dbReference type="PANTHER" id="PTHR30546:SF23">
    <property type="entry name" value="FLAVOPROTEIN-LIKE PROTEIN YCP4-RELATED"/>
    <property type="match status" value="1"/>
</dbReference>
<dbReference type="Pfam" id="PF03358">
    <property type="entry name" value="FMN_red"/>
    <property type="match status" value="1"/>
</dbReference>
<dbReference type="SUPFAM" id="SSF52218">
    <property type="entry name" value="Flavoproteins"/>
    <property type="match status" value="1"/>
</dbReference>
<dbReference type="PROSITE" id="PS50902">
    <property type="entry name" value="FLAVODOXIN_LIKE"/>
    <property type="match status" value="1"/>
</dbReference>
<gene>
    <name type="ordered locus">azo2968</name>
</gene>
<comment type="catalytic activity">
    <reaction evidence="1">
        <text>a quinone + NADH + H(+) = a quinol + NAD(+)</text>
        <dbReference type="Rhea" id="RHEA:46160"/>
        <dbReference type="ChEBI" id="CHEBI:15378"/>
        <dbReference type="ChEBI" id="CHEBI:24646"/>
        <dbReference type="ChEBI" id="CHEBI:57540"/>
        <dbReference type="ChEBI" id="CHEBI:57945"/>
        <dbReference type="ChEBI" id="CHEBI:132124"/>
        <dbReference type="EC" id="1.6.5.2"/>
    </reaction>
</comment>
<comment type="catalytic activity">
    <reaction evidence="1">
        <text>a quinone + NADPH + H(+) = a quinol + NADP(+)</text>
        <dbReference type="Rhea" id="RHEA:46164"/>
        <dbReference type="ChEBI" id="CHEBI:15378"/>
        <dbReference type="ChEBI" id="CHEBI:24646"/>
        <dbReference type="ChEBI" id="CHEBI:57783"/>
        <dbReference type="ChEBI" id="CHEBI:58349"/>
        <dbReference type="ChEBI" id="CHEBI:132124"/>
        <dbReference type="EC" id="1.6.5.2"/>
    </reaction>
</comment>
<comment type="cofactor">
    <cofactor evidence="1">
        <name>FMN</name>
        <dbReference type="ChEBI" id="CHEBI:58210"/>
    </cofactor>
    <text evidence="1">Binds 1 FMN per monomer.</text>
</comment>
<comment type="similarity">
    <text evidence="1">Belongs to the WrbA family.</text>
</comment>
<sequence>MAKVLVLYYSSYGHIEKMAEAVAAGARDAGAEVTIKRVPELVPEEVARKSGMKLDQPAPVATVGELPDYDAIIFGTPTRFGNMASQMRNFLDQTGGLWMSGKLVGKVGSVFASTATQHGGQETTITSFHTTLLHHGMVIVGLPYTEARQMNMDEITGGSPYGATTLAKGDGTRQPSENELAMARFQGGHVAKIAAKLAG</sequence>
<reference key="1">
    <citation type="journal article" date="2006" name="Nat. Biotechnol.">
        <title>Complete genome of the mutualistic, N2-fixing grass endophyte Azoarcus sp. strain BH72.</title>
        <authorList>
            <person name="Krause A."/>
            <person name="Ramakumar A."/>
            <person name="Bartels D."/>
            <person name="Battistoni F."/>
            <person name="Bekel T."/>
            <person name="Boch J."/>
            <person name="Boehm M."/>
            <person name="Friedrich F."/>
            <person name="Hurek T."/>
            <person name="Krause L."/>
            <person name="Linke B."/>
            <person name="McHardy A.C."/>
            <person name="Sarkar A."/>
            <person name="Schneiker S."/>
            <person name="Syed A.A."/>
            <person name="Thauer R."/>
            <person name="Vorhoelter F.-J."/>
            <person name="Weidner S."/>
            <person name="Puehler A."/>
            <person name="Reinhold-Hurek B."/>
            <person name="Kaiser O."/>
            <person name="Goesmann A."/>
        </authorList>
    </citation>
    <scope>NUCLEOTIDE SEQUENCE [LARGE SCALE GENOMIC DNA]</scope>
    <source>
        <strain>BH72</strain>
    </source>
</reference>
<proteinExistence type="inferred from homology"/>
<keyword id="KW-0285">Flavoprotein</keyword>
<keyword id="KW-0288">FMN</keyword>
<keyword id="KW-0520">NAD</keyword>
<keyword id="KW-0521">NADP</keyword>
<keyword id="KW-0547">Nucleotide-binding</keyword>
<keyword id="KW-0560">Oxidoreductase</keyword>
<keyword id="KW-1185">Reference proteome</keyword>
<accession>A1K9S9</accession>
<feature type="chain" id="PRO_0000291004" description="NAD(P)H dehydrogenase (quinone)">
    <location>
        <begin position="1"/>
        <end position="199"/>
    </location>
</feature>
<feature type="domain" description="Flavodoxin-like" evidence="1">
    <location>
        <begin position="4"/>
        <end position="190"/>
    </location>
</feature>
<feature type="binding site" evidence="1">
    <location>
        <begin position="10"/>
        <end position="15"/>
    </location>
    <ligand>
        <name>FMN</name>
        <dbReference type="ChEBI" id="CHEBI:58210"/>
    </ligand>
</feature>
<feature type="binding site" evidence="1">
    <location>
        <position position="12"/>
    </location>
    <ligand>
        <name>NAD(+)</name>
        <dbReference type="ChEBI" id="CHEBI:57540"/>
    </ligand>
</feature>
<feature type="binding site" evidence="1">
    <location>
        <begin position="78"/>
        <end position="80"/>
    </location>
    <ligand>
        <name>FMN</name>
        <dbReference type="ChEBI" id="CHEBI:58210"/>
    </ligand>
</feature>
<feature type="binding site" evidence="1">
    <location>
        <position position="98"/>
    </location>
    <ligand>
        <name>substrate</name>
    </ligand>
</feature>
<feature type="binding site" evidence="1">
    <location>
        <begin position="113"/>
        <end position="119"/>
    </location>
    <ligand>
        <name>FMN</name>
        <dbReference type="ChEBI" id="CHEBI:58210"/>
    </ligand>
</feature>
<feature type="binding site" evidence="1">
    <location>
        <position position="134"/>
    </location>
    <ligand>
        <name>FMN</name>
        <dbReference type="ChEBI" id="CHEBI:58210"/>
    </ligand>
</feature>
<protein>
    <recommendedName>
        <fullName evidence="1">NAD(P)H dehydrogenase (quinone)</fullName>
        <ecNumber evidence="1">1.6.5.2</ecNumber>
    </recommendedName>
    <alternativeName>
        <fullName>Flavoprotein WrbA</fullName>
    </alternativeName>
    <alternativeName>
        <fullName evidence="1">NAD(P)H:quinone oxidoreductase</fullName>
        <shortName evidence="1">NQO</shortName>
    </alternativeName>
</protein>
<evidence type="ECO:0000255" key="1">
    <source>
        <dbReference type="HAMAP-Rule" id="MF_01017"/>
    </source>
</evidence>